<keyword id="KW-0067">ATP-binding</keyword>
<keyword id="KW-0963">Cytoplasm</keyword>
<keyword id="KW-0235">DNA replication</keyword>
<keyword id="KW-0238">DNA-binding</keyword>
<keyword id="KW-0446">Lipid-binding</keyword>
<keyword id="KW-0547">Nucleotide-binding</keyword>
<keyword id="KW-1185">Reference proteome</keyword>
<gene>
    <name evidence="1" type="primary">dnaA</name>
    <name type="ordered locus">Sfri_0001</name>
</gene>
<evidence type="ECO:0000255" key="1">
    <source>
        <dbReference type="HAMAP-Rule" id="MF_00377"/>
    </source>
</evidence>
<organism>
    <name type="scientific">Shewanella frigidimarina (strain NCIMB 400)</name>
    <dbReference type="NCBI Taxonomy" id="318167"/>
    <lineage>
        <taxon>Bacteria</taxon>
        <taxon>Pseudomonadati</taxon>
        <taxon>Pseudomonadota</taxon>
        <taxon>Gammaproteobacteria</taxon>
        <taxon>Alteromonadales</taxon>
        <taxon>Shewanellaceae</taxon>
        <taxon>Shewanella</taxon>
    </lineage>
</organism>
<accession>Q08A51</accession>
<sequence>MAVSLWQQCIGRLQDELSAQQFSMWIRPLQAEMDGDTLVLYAPNRFVLDWVRDKYINIINQFFTEQMGSNAPKLRFDIGSRPSARPVAPAPVAAKPVNRQTKAQVGTTSFNTQAEPIINPNHRSNINPTYQFDNFVEGKSNQLGKAAALQVSENPGGAYNPLFLYGGTGLGKTHLLHAVGNGIIKNNPNAKVVYMHSERFVQDMVKALQNNAIEEFKRYYRSVDALFIDDIQFFANKDRSQEEFFHTFNALLEGNHQIILTSDRYPKEIDGVEDRLKSRFGWGLTVAIEPPELETRVAILMRKAQESGINLPDEVAFFIAKRLRSNVRELEGALNRVIANANFTGRPITIDFVREALRDLLALQEKLVTIDNIQKTVAEYYKIKMADMLSKRRSRSVARPRQVAMALSKELTNQSLPEIGDAFGGRDHTTVLHACRKIAQLREESHDIKEDYANLIRTLSS</sequence>
<comment type="function">
    <text evidence="1">Plays an essential role in the initiation and regulation of chromosomal replication. ATP-DnaA binds to the origin of replication (oriC) to initiate formation of the DNA replication initiation complex once per cell cycle. Binds the DnaA box (a 9 base pair repeat at the origin) and separates the double-stranded (ds)DNA. Forms a right-handed helical filament on oriC DNA; dsDNA binds to the exterior of the filament while single-stranded (ss)DNA is stabiized in the filament's interior. The ATP-DnaA-oriC complex binds and stabilizes one strand of the AT-rich DNA unwinding element (DUE), permitting loading of DNA polymerase. After initiation quickly degrades to an ADP-DnaA complex that is not apt for DNA replication. Binds acidic phospholipids.</text>
</comment>
<comment type="subunit">
    <text evidence="1">Oligomerizes as a right-handed, spiral filament on DNA at oriC.</text>
</comment>
<comment type="subcellular location">
    <subcellularLocation>
        <location evidence="1">Cytoplasm</location>
    </subcellularLocation>
</comment>
<comment type="domain">
    <text evidence="1">Domain I is involved in oligomerization and binding regulators, domain II is flexibile and of varying length in different bacteria, domain III forms the AAA+ region, while domain IV binds dsDNA.</text>
</comment>
<comment type="similarity">
    <text evidence="1">Belongs to the DnaA family.</text>
</comment>
<feature type="chain" id="PRO_1000048719" description="Chromosomal replication initiator protein DnaA">
    <location>
        <begin position="1"/>
        <end position="461"/>
    </location>
</feature>
<feature type="region of interest" description="Domain I, interacts with DnaA modulators" evidence="1">
    <location>
        <begin position="1"/>
        <end position="90"/>
    </location>
</feature>
<feature type="region of interest" description="Domain II" evidence="1">
    <location>
        <begin position="91"/>
        <end position="124"/>
    </location>
</feature>
<feature type="region of interest" description="Domain III, AAA+ region" evidence="1">
    <location>
        <begin position="125"/>
        <end position="341"/>
    </location>
</feature>
<feature type="region of interest" description="Domain IV, binds dsDNA" evidence="1">
    <location>
        <begin position="342"/>
        <end position="461"/>
    </location>
</feature>
<feature type="binding site" evidence="1">
    <location>
        <position position="169"/>
    </location>
    <ligand>
        <name>ATP</name>
        <dbReference type="ChEBI" id="CHEBI:30616"/>
    </ligand>
</feature>
<feature type="binding site" evidence="1">
    <location>
        <position position="171"/>
    </location>
    <ligand>
        <name>ATP</name>
        <dbReference type="ChEBI" id="CHEBI:30616"/>
    </ligand>
</feature>
<feature type="binding site" evidence="1">
    <location>
        <position position="172"/>
    </location>
    <ligand>
        <name>ATP</name>
        <dbReference type="ChEBI" id="CHEBI:30616"/>
    </ligand>
</feature>
<feature type="binding site" evidence="1">
    <location>
        <position position="173"/>
    </location>
    <ligand>
        <name>ATP</name>
        <dbReference type="ChEBI" id="CHEBI:30616"/>
    </ligand>
</feature>
<dbReference type="EMBL" id="CP000447">
    <property type="protein sequence ID" value="ABI69864.1"/>
    <property type="molecule type" value="Genomic_DNA"/>
</dbReference>
<dbReference type="RefSeq" id="WP_011635493.1">
    <property type="nucleotide sequence ID" value="NC_008345.1"/>
</dbReference>
<dbReference type="SMR" id="Q08A51"/>
<dbReference type="STRING" id="318167.Sfri_0001"/>
<dbReference type="KEGG" id="sfr:Sfri_0001"/>
<dbReference type="eggNOG" id="COG0593">
    <property type="taxonomic scope" value="Bacteria"/>
</dbReference>
<dbReference type="HOGENOM" id="CLU_026910_0_1_6"/>
<dbReference type="OrthoDB" id="9807019at2"/>
<dbReference type="Proteomes" id="UP000000684">
    <property type="component" value="Chromosome"/>
</dbReference>
<dbReference type="GO" id="GO:0005737">
    <property type="term" value="C:cytoplasm"/>
    <property type="evidence" value="ECO:0007669"/>
    <property type="project" value="UniProtKB-SubCell"/>
</dbReference>
<dbReference type="GO" id="GO:0005886">
    <property type="term" value="C:plasma membrane"/>
    <property type="evidence" value="ECO:0007669"/>
    <property type="project" value="TreeGrafter"/>
</dbReference>
<dbReference type="GO" id="GO:0005524">
    <property type="term" value="F:ATP binding"/>
    <property type="evidence" value="ECO:0007669"/>
    <property type="project" value="UniProtKB-UniRule"/>
</dbReference>
<dbReference type="GO" id="GO:0016887">
    <property type="term" value="F:ATP hydrolysis activity"/>
    <property type="evidence" value="ECO:0007669"/>
    <property type="project" value="InterPro"/>
</dbReference>
<dbReference type="GO" id="GO:0003688">
    <property type="term" value="F:DNA replication origin binding"/>
    <property type="evidence" value="ECO:0007669"/>
    <property type="project" value="UniProtKB-UniRule"/>
</dbReference>
<dbReference type="GO" id="GO:0008289">
    <property type="term" value="F:lipid binding"/>
    <property type="evidence" value="ECO:0007669"/>
    <property type="project" value="UniProtKB-KW"/>
</dbReference>
<dbReference type="GO" id="GO:0006270">
    <property type="term" value="P:DNA replication initiation"/>
    <property type="evidence" value="ECO:0007669"/>
    <property type="project" value="UniProtKB-UniRule"/>
</dbReference>
<dbReference type="GO" id="GO:0006275">
    <property type="term" value="P:regulation of DNA replication"/>
    <property type="evidence" value="ECO:0007669"/>
    <property type="project" value="UniProtKB-UniRule"/>
</dbReference>
<dbReference type="CDD" id="cd00009">
    <property type="entry name" value="AAA"/>
    <property type="match status" value="1"/>
</dbReference>
<dbReference type="CDD" id="cd06571">
    <property type="entry name" value="Bac_DnaA_C"/>
    <property type="match status" value="1"/>
</dbReference>
<dbReference type="FunFam" id="1.10.1750.10:FF:000001">
    <property type="entry name" value="Chromosomal replication initiator protein DnaA"/>
    <property type="match status" value="1"/>
</dbReference>
<dbReference type="FunFam" id="1.10.8.60:FF:000003">
    <property type="entry name" value="Chromosomal replication initiator protein DnaA"/>
    <property type="match status" value="1"/>
</dbReference>
<dbReference type="FunFam" id="3.30.300.180:FF:000001">
    <property type="entry name" value="Chromosomal replication initiator protein DnaA"/>
    <property type="match status" value="1"/>
</dbReference>
<dbReference type="FunFam" id="3.40.50.300:FF:000103">
    <property type="entry name" value="Chromosomal replication initiator protein DnaA"/>
    <property type="match status" value="1"/>
</dbReference>
<dbReference type="Gene3D" id="1.10.1750.10">
    <property type="match status" value="1"/>
</dbReference>
<dbReference type="Gene3D" id="1.10.8.60">
    <property type="match status" value="1"/>
</dbReference>
<dbReference type="Gene3D" id="3.30.300.180">
    <property type="match status" value="1"/>
</dbReference>
<dbReference type="Gene3D" id="3.40.50.300">
    <property type="entry name" value="P-loop containing nucleotide triphosphate hydrolases"/>
    <property type="match status" value="1"/>
</dbReference>
<dbReference type="HAMAP" id="MF_00377">
    <property type="entry name" value="DnaA_bact"/>
    <property type="match status" value="1"/>
</dbReference>
<dbReference type="InterPro" id="IPR003593">
    <property type="entry name" value="AAA+_ATPase"/>
</dbReference>
<dbReference type="InterPro" id="IPR001957">
    <property type="entry name" value="Chromosome_initiator_DnaA"/>
</dbReference>
<dbReference type="InterPro" id="IPR020591">
    <property type="entry name" value="Chromosome_initiator_DnaA-like"/>
</dbReference>
<dbReference type="InterPro" id="IPR018312">
    <property type="entry name" value="Chromosome_initiator_DnaA_CS"/>
</dbReference>
<dbReference type="InterPro" id="IPR013159">
    <property type="entry name" value="DnaA_C"/>
</dbReference>
<dbReference type="InterPro" id="IPR013317">
    <property type="entry name" value="DnaA_dom"/>
</dbReference>
<dbReference type="InterPro" id="IPR024633">
    <property type="entry name" value="DnaA_N_dom"/>
</dbReference>
<dbReference type="InterPro" id="IPR038454">
    <property type="entry name" value="DnaA_N_sf"/>
</dbReference>
<dbReference type="InterPro" id="IPR055199">
    <property type="entry name" value="Hda_lid"/>
</dbReference>
<dbReference type="InterPro" id="IPR027417">
    <property type="entry name" value="P-loop_NTPase"/>
</dbReference>
<dbReference type="InterPro" id="IPR010921">
    <property type="entry name" value="Trp_repressor/repl_initiator"/>
</dbReference>
<dbReference type="NCBIfam" id="TIGR00362">
    <property type="entry name" value="DnaA"/>
    <property type="match status" value="1"/>
</dbReference>
<dbReference type="PANTHER" id="PTHR30050">
    <property type="entry name" value="CHROMOSOMAL REPLICATION INITIATOR PROTEIN DNAA"/>
    <property type="match status" value="1"/>
</dbReference>
<dbReference type="PANTHER" id="PTHR30050:SF2">
    <property type="entry name" value="CHROMOSOMAL REPLICATION INITIATOR PROTEIN DNAA"/>
    <property type="match status" value="1"/>
</dbReference>
<dbReference type="Pfam" id="PF00308">
    <property type="entry name" value="Bac_DnaA"/>
    <property type="match status" value="1"/>
</dbReference>
<dbReference type="Pfam" id="PF08299">
    <property type="entry name" value="Bac_DnaA_C"/>
    <property type="match status" value="1"/>
</dbReference>
<dbReference type="Pfam" id="PF11638">
    <property type="entry name" value="DnaA_N"/>
    <property type="match status" value="1"/>
</dbReference>
<dbReference type="Pfam" id="PF22688">
    <property type="entry name" value="Hda_lid"/>
    <property type="match status" value="1"/>
</dbReference>
<dbReference type="PRINTS" id="PR00051">
    <property type="entry name" value="DNAA"/>
</dbReference>
<dbReference type="SMART" id="SM00382">
    <property type="entry name" value="AAA"/>
    <property type="match status" value="1"/>
</dbReference>
<dbReference type="SMART" id="SM00760">
    <property type="entry name" value="Bac_DnaA_C"/>
    <property type="match status" value="1"/>
</dbReference>
<dbReference type="SUPFAM" id="SSF52540">
    <property type="entry name" value="P-loop containing nucleoside triphosphate hydrolases"/>
    <property type="match status" value="1"/>
</dbReference>
<dbReference type="SUPFAM" id="SSF48295">
    <property type="entry name" value="TrpR-like"/>
    <property type="match status" value="1"/>
</dbReference>
<dbReference type="PROSITE" id="PS01008">
    <property type="entry name" value="DNAA"/>
    <property type="match status" value="1"/>
</dbReference>
<protein>
    <recommendedName>
        <fullName evidence="1">Chromosomal replication initiator protein DnaA</fullName>
    </recommendedName>
</protein>
<proteinExistence type="inferred from homology"/>
<reference key="1">
    <citation type="submission" date="2006-08" db="EMBL/GenBank/DDBJ databases">
        <title>Complete sequence of Shewanella frigidimarina NCIMB 400.</title>
        <authorList>
            <consortium name="US DOE Joint Genome Institute"/>
            <person name="Copeland A."/>
            <person name="Lucas S."/>
            <person name="Lapidus A."/>
            <person name="Barry K."/>
            <person name="Detter J.C."/>
            <person name="Glavina del Rio T."/>
            <person name="Hammon N."/>
            <person name="Israni S."/>
            <person name="Dalin E."/>
            <person name="Tice H."/>
            <person name="Pitluck S."/>
            <person name="Fredrickson J.K."/>
            <person name="Kolker E."/>
            <person name="McCuel L.A."/>
            <person name="DiChristina T."/>
            <person name="Nealson K.H."/>
            <person name="Newman D."/>
            <person name="Tiedje J.M."/>
            <person name="Zhou J."/>
            <person name="Romine M.F."/>
            <person name="Culley D.E."/>
            <person name="Serres M."/>
            <person name="Chertkov O."/>
            <person name="Brettin T."/>
            <person name="Bruce D."/>
            <person name="Han C."/>
            <person name="Tapia R."/>
            <person name="Gilna P."/>
            <person name="Schmutz J."/>
            <person name="Larimer F."/>
            <person name="Land M."/>
            <person name="Hauser L."/>
            <person name="Kyrpides N."/>
            <person name="Mikhailova N."/>
            <person name="Richardson P."/>
        </authorList>
    </citation>
    <scope>NUCLEOTIDE SEQUENCE [LARGE SCALE GENOMIC DNA]</scope>
    <source>
        <strain>NCIMB 400</strain>
    </source>
</reference>
<name>DNAA_SHEFN</name>